<keyword id="KW-0031">Aminopeptidase</keyword>
<keyword id="KW-0963">Cytoplasm</keyword>
<keyword id="KW-0378">Hydrolase</keyword>
<keyword id="KW-0464">Manganese</keyword>
<keyword id="KW-0479">Metal-binding</keyword>
<keyword id="KW-0645">Protease</keyword>
<evidence type="ECO:0000255" key="1">
    <source>
        <dbReference type="HAMAP-Rule" id="MF_00181"/>
    </source>
</evidence>
<name>AMPA_BORPD</name>
<accession>A9IIK3</accession>
<organism>
    <name type="scientific">Bordetella petrii (strain ATCC BAA-461 / DSM 12804 / CCUG 43448)</name>
    <dbReference type="NCBI Taxonomy" id="340100"/>
    <lineage>
        <taxon>Bacteria</taxon>
        <taxon>Pseudomonadati</taxon>
        <taxon>Pseudomonadota</taxon>
        <taxon>Betaproteobacteria</taxon>
        <taxon>Burkholderiales</taxon>
        <taxon>Alcaligenaceae</taxon>
        <taxon>Bordetella</taxon>
    </lineage>
</organism>
<proteinExistence type="inferred from homology"/>
<gene>
    <name evidence="1" type="primary">pepA</name>
    <name type="ordered locus">Bpet1771</name>
</gene>
<reference key="1">
    <citation type="journal article" date="2008" name="BMC Genomics">
        <title>The missing link: Bordetella petrii is endowed with both the metabolic versatility of environmental bacteria and virulence traits of pathogenic Bordetellae.</title>
        <authorList>
            <person name="Gross R."/>
            <person name="Guzman C.A."/>
            <person name="Sebaihia M."/>
            <person name="Martin dos Santos V.A.P."/>
            <person name="Pieper D.H."/>
            <person name="Koebnik R."/>
            <person name="Lechner M."/>
            <person name="Bartels D."/>
            <person name="Buhrmester J."/>
            <person name="Choudhuri J.V."/>
            <person name="Ebensen T."/>
            <person name="Gaigalat L."/>
            <person name="Herrmann S."/>
            <person name="Khachane A.N."/>
            <person name="Larisch C."/>
            <person name="Link S."/>
            <person name="Linke B."/>
            <person name="Meyer F."/>
            <person name="Mormann S."/>
            <person name="Nakunst D."/>
            <person name="Rueckert C."/>
            <person name="Schneiker-Bekel S."/>
            <person name="Schulze K."/>
            <person name="Voerholter F.-J."/>
            <person name="Yevsa T."/>
            <person name="Engle J.T."/>
            <person name="Goldman W.E."/>
            <person name="Puehler A."/>
            <person name="Goebel U.B."/>
            <person name="Goesmann A."/>
            <person name="Bloecker H."/>
            <person name="Kaiser O."/>
            <person name="Martinez-Arias R."/>
        </authorList>
    </citation>
    <scope>NUCLEOTIDE SEQUENCE [LARGE SCALE GENOMIC DNA]</scope>
    <source>
        <strain>ATCC BAA-461 / DSM 12804 / CCUG 43448</strain>
    </source>
</reference>
<feature type="chain" id="PRO_1000098305" description="Probable cytosol aminopeptidase">
    <location>
        <begin position="1"/>
        <end position="498"/>
    </location>
</feature>
<feature type="active site" evidence="1">
    <location>
        <position position="283"/>
    </location>
</feature>
<feature type="active site" evidence="1">
    <location>
        <position position="357"/>
    </location>
</feature>
<feature type="binding site" evidence="1">
    <location>
        <position position="271"/>
    </location>
    <ligand>
        <name>Mn(2+)</name>
        <dbReference type="ChEBI" id="CHEBI:29035"/>
        <label>2</label>
    </ligand>
</feature>
<feature type="binding site" evidence="1">
    <location>
        <position position="276"/>
    </location>
    <ligand>
        <name>Mn(2+)</name>
        <dbReference type="ChEBI" id="CHEBI:29035"/>
        <label>1</label>
    </ligand>
</feature>
<feature type="binding site" evidence="1">
    <location>
        <position position="276"/>
    </location>
    <ligand>
        <name>Mn(2+)</name>
        <dbReference type="ChEBI" id="CHEBI:29035"/>
        <label>2</label>
    </ligand>
</feature>
<feature type="binding site" evidence="1">
    <location>
        <position position="294"/>
    </location>
    <ligand>
        <name>Mn(2+)</name>
        <dbReference type="ChEBI" id="CHEBI:29035"/>
        <label>2</label>
    </ligand>
</feature>
<feature type="binding site" evidence="1">
    <location>
        <position position="353"/>
    </location>
    <ligand>
        <name>Mn(2+)</name>
        <dbReference type="ChEBI" id="CHEBI:29035"/>
        <label>1</label>
    </ligand>
</feature>
<feature type="binding site" evidence="1">
    <location>
        <position position="355"/>
    </location>
    <ligand>
        <name>Mn(2+)</name>
        <dbReference type="ChEBI" id="CHEBI:29035"/>
        <label>1</label>
    </ligand>
</feature>
<feature type="binding site" evidence="1">
    <location>
        <position position="355"/>
    </location>
    <ligand>
        <name>Mn(2+)</name>
        <dbReference type="ChEBI" id="CHEBI:29035"/>
        <label>2</label>
    </ligand>
</feature>
<dbReference type="EC" id="3.4.11.1" evidence="1"/>
<dbReference type="EC" id="3.4.11.10" evidence="1"/>
<dbReference type="EMBL" id="AM902716">
    <property type="protein sequence ID" value="CAP42111.1"/>
    <property type="molecule type" value="Genomic_DNA"/>
</dbReference>
<dbReference type="SMR" id="A9IIK3"/>
<dbReference type="STRING" id="94624.Bpet1771"/>
<dbReference type="KEGG" id="bpt:Bpet1771"/>
<dbReference type="eggNOG" id="COG0260">
    <property type="taxonomic scope" value="Bacteria"/>
</dbReference>
<dbReference type="Proteomes" id="UP000001225">
    <property type="component" value="Chromosome"/>
</dbReference>
<dbReference type="GO" id="GO:0005737">
    <property type="term" value="C:cytoplasm"/>
    <property type="evidence" value="ECO:0007669"/>
    <property type="project" value="UniProtKB-SubCell"/>
</dbReference>
<dbReference type="GO" id="GO:0030145">
    <property type="term" value="F:manganese ion binding"/>
    <property type="evidence" value="ECO:0007669"/>
    <property type="project" value="UniProtKB-UniRule"/>
</dbReference>
<dbReference type="GO" id="GO:0070006">
    <property type="term" value="F:metalloaminopeptidase activity"/>
    <property type="evidence" value="ECO:0007669"/>
    <property type="project" value="InterPro"/>
</dbReference>
<dbReference type="GO" id="GO:0006508">
    <property type="term" value="P:proteolysis"/>
    <property type="evidence" value="ECO:0007669"/>
    <property type="project" value="UniProtKB-KW"/>
</dbReference>
<dbReference type="CDD" id="cd00433">
    <property type="entry name" value="Peptidase_M17"/>
    <property type="match status" value="1"/>
</dbReference>
<dbReference type="FunFam" id="3.40.630.10:FF:000004">
    <property type="entry name" value="Probable cytosol aminopeptidase"/>
    <property type="match status" value="1"/>
</dbReference>
<dbReference type="Gene3D" id="3.40.220.10">
    <property type="entry name" value="Leucine Aminopeptidase, subunit E, domain 1"/>
    <property type="match status" value="1"/>
</dbReference>
<dbReference type="Gene3D" id="3.40.630.10">
    <property type="entry name" value="Zn peptidases"/>
    <property type="match status" value="1"/>
</dbReference>
<dbReference type="HAMAP" id="MF_00181">
    <property type="entry name" value="Cytosol_peptidase_M17"/>
    <property type="match status" value="1"/>
</dbReference>
<dbReference type="InterPro" id="IPR011356">
    <property type="entry name" value="Leucine_aapep/pepB"/>
</dbReference>
<dbReference type="InterPro" id="IPR043472">
    <property type="entry name" value="Macro_dom-like"/>
</dbReference>
<dbReference type="InterPro" id="IPR000819">
    <property type="entry name" value="Peptidase_M17_C"/>
</dbReference>
<dbReference type="InterPro" id="IPR023042">
    <property type="entry name" value="Peptidase_M17_leu_NH2_pept"/>
</dbReference>
<dbReference type="InterPro" id="IPR008283">
    <property type="entry name" value="Peptidase_M17_N"/>
</dbReference>
<dbReference type="NCBIfam" id="NF002074">
    <property type="entry name" value="PRK00913.1-4"/>
    <property type="match status" value="1"/>
</dbReference>
<dbReference type="PANTHER" id="PTHR11963:SF23">
    <property type="entry name" value="CYTOSOL AMINOPEPTIDASE"/>
    <property type="match status" value="1"/>
</dbReference>
<dbReference type="PANTHER" id="PTHR11963">
    <property type="entry name" value="LEUCINE AMINOPEPTIDASE-RELATED"/>
    <property type="match status" value="1"/>
</dbReference>
<dbReference type="Pfam" id="PF00883">
    <property type="entry name" value="Peptidase_M17"/>
    <property type="match status" value="1"/>
</dbReference>
<dbReference type="Pfam" id="PF02789">
    <property type="entry name" value="Peptidase_M17_N"/>
    <property type="match status" value="1"/>
</dbReference>
<dbReference type="PRINTS" id="PR00481">
    <property type="entry name" value="LAMNOPPTDASE"/>
</dbReference>
<dbReference type="SUPFAM" id="SSF52949">
    <property type="entry name" value="Macro domain-like"/>
    <property type="match status" value="1"/>
</dbReference>
<dbReference type="SUPFAM" id="SSF53187">
    <property type="entry name" value="Zn-dependent exopeptidases"/>
    <property type="match status" value="1"/>
</dbReference>
<dbReference type="PROSITE" id="PS00631">
    <property type="entry name" value="CYTOSOL_AP"/>
    <property type="match status" value="1"/>
</dbReference>
<comment type="function">
    <text evidence="1">Presumably involved in the processing and regular turnover of intracellular proteins. Catalyzes the removal of unsubstituted N-terminal amino acids from various peptides.</text>
</comment>
<comment type="catalytic activity">
    <reaction evidence="1">
        <text>Release of an N-terminal amino acid, Xaa-|-Yaa-, in which Xaa is preferably Leu, but may be other amino acids including Pro although not Arg or Lys, and Yaa may be Pro. Amino acid amides and methyl esters are also readily hydrolyzed, but rates on arylamides are exceedingly low.</text>
        <dbReference type="EC" id="3.4.11.1"/>
    </reaction>
</comment>
<comment type="catalytic activity">
    <reaction evidence="1">
        <text>Release of an N-terminal amino acid, preferentially leucine, but not glutamic or aspartic acids.</text>
        <dbReference type="EC" id="3.4.11.10"/>
    </reaction>
</comment>
<comment type="cofactor">
    <cofactor evidence="1">
        <name>Mn(2+)</name>
        <dbReference type="ChEBI" id="CHEBI:29035"/>
    </cofactor>
    <text evidence="1">Binds 2 manganese ions per subunit.</text>
</comment>
<comment type="subcellular location">
    <subcellularLocation>
        <location evidence="1">Cytoplasm</location>
    </subcellularLocation>
</comment>
<comment type="similarity">
    <text evidence="1">Belongs to the peptidase M17 family.</text>
</comment>
<sequence>MEFSTQSTASLHQIKTAALAVGVYADGELSPAADVIDRASNNAVRQVVKAEFRGRPGATLVLRALPGVSAQRVVLVGLGKQSEYNARAHAAAEQGFAAACVAARITEAVSTLAANSIADTPIRARARSAAIAAGAATYHYDATFGKPDRDARPKLKKIVQVVERGEAAQTQQGLREGSAIAHGMELTRTLGNLPGNVCTPTYLGDTARKLAREFKSLKVEVLDRKQVEALGMGSFLSVARGSDEPLRFIVLRHAGKPAKKSKAGPVVLVGKGITFDAGGISLKPAATMDEMKYDMCGAASVLGTFRALAELELPLDVVGLIAACENLPSGKANKPGDIVTSMSGQTIEILNTDAEGRLVLCDALTYAERFKPSAVVDIATLTGACVVALGHVNTGLFTQDDALADALLAAGRQSLDTAWRMPMDDAYQDQLKSNFADVANIGGPPAGSVTAACFLSRFAKAYRWAHLDIAGTAWRSGKDKGATGRPVPLLMQFLLDQA</sequence>
<protein>
    <recommendedName>
        <fullName evidence="1">Probable cytosol aminopeptidase</fullName>
        <ecNumber evidence="1">3.4.11.1</ecNumber>
    </recommendedName>
    <alternativeName>
        <fullName evidence="1">Leucine aminopeptidase</fullName>
        <shortName evidence="1">LAP</shortName>
        <ecNumber evidence="1">3.4.11.10</ecNumber>
    </alternativeName>
    <alternativeName>
        <fullName evidence="1">Leucyl aminopeptidase</fullName>
    </alternativeName>
</protein>